<accession>Q5GZ91</accession>
<protein>
    <recommendedName>
        <fullName evidence="1">Protease HtpX</fullName>
        <ecNumber evidence="1">3.4.24.-</ecNumber>
    </recommendedName>
    <alternativeName>
        <fullName evidence="1">Heat shock protein HtpX</fullName>
    </alternativeName>
</protein>
<sequence length="292" mass="31201">MFNRIFLFLLTNVAVLMLAGVVMSVLGVNPAQMSGLLVMAAIFGFGGSFISLLLSKFMAKRSTGAQVITEPRTPTERWLLETVRRQAQAAGIGMPEVAVYDGPEINAFATGANRNNALVAVSTGLLQHMDQDEAEAVLGHEIAHVANGDMVTMALLQGVLNTFVIVLARVVGGIIDSAVSGNRDSGRGFAYYIIVFVLEMVFGMFATMIAMWFSRRREFRADAGGAQLAGRSKMIAALERLSLNHGQNTLPSQVQAFGISGGVGDGLRRLFLSHPPLTERIAALRAANGTAM</sequence>
<comment type="cofactor">
    <cofactor evidence="1">
        <name>Zn(2+)</name>
        <dbReference type="ChEBI" id="CHEBI:29105"/>
    </cofactor>
    <text evidence="1">Binds 1 zinc ion per subunit.</text>
</comment>
<comment type="subcellular location">
    <subcellularLocation>
        <location evidence="1">Cell inner membrane</location>
        <topology evidence="1">Multi-pass membrane protein</topology>
    </subcellularLocation>
</comment>
<comment type="similarity">
    <text evidence="1">Belongs to the peptidase M48B family.</text>
</comment>
<evidence type="ECO:0000255" key="1">
    <source>
        <dbReference type="HAMAP-Rule" id="MF_00188"/>
    </source>
</evidence>
<gene>
    <name evidence="1" type="primary">htpX</name>
    <name type="ordered locus">XOO2726</name>
</gene>
<feature type="chain" id="PRO_1000020971" description="Protease HtpX">
    <location>
        <begin position="1"/>
        <end position="292"/>
    </location>
</feature>
<feature type="transmembrane region" description="Helical" evidence="1">
    <location>
        <begin position="5"/>
        <end position="25"/>
    </location>
</feature>
<feature type="transmembrane region" description="Helical" evidence="1">
    <location>
        <begin position="34"/>
        <end position="54"/>
    </location>
</feature>
<feature type="transmembrane region" description="Helical" evidence="1">
    <location>
        <begin position="155"/>
        <end position="175"/>
    </location>
</feature>
<feature type="transmembrane region" description="Helical" evidence="1">
    <location>
        <begin position="193"/>
        <end position="213"/>
    </location>
</feature>
<feature type="active site" evidence="1">
    <location>
        <position position="141"/>
    </location>
</feature>
<feature type="binding site" evidence="1">
    <location>
        <position position="140"/>
    </location>
    <ligand>
        <name>Zn(2+)</name>
        <dbReference type="ChEBI" id="CHEBI:29105"/>
        <note>catalytic</note>
    </ligand>
</feature>
<feature type="binding site" evidence="1">
    <location>
        <position position="144"/>
    </location>
    <ligand>
        <name>Zn(2+)</name>
        <dbReference type="ChEBI" id="CHEBI:29105"/>
        <note>catalytic</note>
    </ligand>
</feature>
<feature type="binding site" evidence="1">
    <location>
        <position position="218"/>
    </location>
    <ligand>
        <name>Zn(2+)</name>
        <dbReference type="ChEBI" id="CHEBI:29105"/>
        <note>catalytic</note>
    </ligand>
</feature>
<proteinExistence type="inferred from homology"/>
<dbReference type="EC" id="3.4.24.-" evidence="1"/>
<dbReference type="EMBL" id="AE013598">
    <property type="protein sequence ID" value="AAW75980.1"/>
    <property type="molecule type" value="Genomic_DNA"/>
</dbReference>
<dbReference type="SMR" id="Q5GZ91"/>
<dbReference type="STRING" id="291331.XOO2726"/>
<dbReference type="MEROPS" id="M48.002"/>
<dbReference type="KEGG" id="xoo:XOO2726"/>
<dbReference type="HOGENOM" id="CLU_042266_1_0_6"/>
<dbReference type="Proteomes" id="UP000006735">
    <property type="component" value="Chromosome"/>
</dbReference>
<dbReference type="GO" id="GO:0005886">
    <property type="term" value="C:plasma membrane"/>
    <property type="evidence" value="ECO:0007669"/>
    <property type="project" value="UniProtKB-SubCell"/>
</dbReference>
<dbReference type="GO" id="GO:0004222">
    <property type="term" value="F:metalloendopeptidase activity"/>
    <property type="evidence" value="ECO:0007669"/>
    <property type="project" value="UniProtKB-UniRule"/>
</dbReference>
<dbReference type="GO" id="GO:0008270">
    <property type="term" value="F:zinc ion binding"/>
    <property type="evidence" value="ECO:0007669"/>
    <property type="project" value="UniProtKB-UniRule"/>
</dbReference>
<dbReference type="GO" id="GO:0006508">
    <property type="term" value="P:proteolysis"/>
    <property type="evidence" value="ECO:0007669"/>
    <property type="project" value="UniProtKB-KW"/>
</dbReference>
<dbReference type="CDD" id="cd07335">
    <property type="entry name" value="M48B_HtpX_like"/>
    <property type="match status" value="1"/>
</dbReference>
<dbReference type="Gene3D" id="3.30.2010.10">
    <property type="entry name" value="Metalloproteases ('zincins'), catalytic domain"/>
    <property type="match status" value="1"/>
</dbReference>
<dbReference type="HAMAP" id="MF_00188">
    <property type="entry name" value="Pept_M48_protease_HtpX"/>
    <property type="match status" value="1"/>
</dbReference>
<dbReference type="InterPro" id="IPR050083">
    <property type="entry name" value="HtpX_protease"/>
</dbReference>
<dbReference type="InterPro" id="IPR022919">
    <property type="entry name" value="Pept_M48_protease_HtpX"/>
</dbReference>
<dbReference type="InterPro" id="IPR001915">
    <property type="entry name" value="Peptidase_M48"/>
</dbReference>
<dbReference type="NCBIfam" id="NF003965">
    <property type="entry name" value="PRK05457.1"/>
    <property type="match status" value="1"/>
</dbReference>
<dbReference type="PANTHER" id="PTHR43221">
    <property type="entry name" value="PROTEASE HTPX"/>
    <property type="match status" value="1"/>
</dbReference>
<dbReference type="PANTHER" id="PTHR43221:SF1">
    <property type="entry name" value="PROTEASE HTPX"/>
    <property type="match status" value="1"/>
</dbReference>
<dbReference type="Pfam" id="PF01435">
    <property type="entry name" value="Peptidase_M48"/>
    <property type="match status" value="1"/>
</dbReference>
<reference key="1">
    <citation type="journal article" date="2005" name="Nucleic Acids Res.">
        <title>The genome sequence of Xanthomonas oryzae pathovar oryzae KACC10331, the bacterial blight pathogen of rice.</title>
        <authorList>
            <person name="Lee B.-M."/>
            <person name="Park Y.-J."/>
            <person name="Park D.-S."/>
            <person name="Kang H.-W."/>
            <person name="Kim J.-G."/>
            <person name="Song E.-S."/>
            <person name="Park I.-C."/>
            <person name="Yoon U.-H."/>
            <person name="Hahn J.-H."/>
            <person name="Koo B.-S."/>
            <person name="Lee G.-B."/>
            <person name="Kim H."/>
            <person name="Park H.-S."/>
            <person name="Yoon K.-O."/>
            <person name="Kim J.-H."/>
            <person name="Jung C.-H."/>
            <person name="Koh N.-H."/>
            <person name="Seo J.-S."/>
            <person name="Go S.-J."/>
        </authorList>
    </citation>
    <scope>NUCLEOTIDE SEQUENCE [LARGE SCALE GENOMIC DNA]</scope>
    <source>
        <strain>KACC10331 / KXO85</strain>
    </source>
</reference>
<keyword id="KW-0997">Cell inner membrane</keyword>
<keyword id="KW-1003">Cell membrane</keyword>
<keyword id="KW-0378">Hydrolase</keyword>
<keyword id="KW-0472">Membrane</keyword>
<keyword id="KW-0479">Metal-binding</keyword>
<keyword id="KW-0482">Metalloprotease</keyword>
<keyword id="KW-0645">Protease</keyword>
<keyword id="KW-1185">Reference proteome</keyword>
<keyword id="KW-0346">Stress response</keyword>
<keyword id="KW-0812">Transmembrane</keyword>
<keyword id="KW-1133">Transmembrane helix</keyword>
<keyword id="KW-0862">Zinc</keyword>
<name>HTPX_XANOR</name>
<organism>
    <name type="scientific">Xanthomonas oryzae pv. oryzae (strain KACC10331 / KXO85)</name>
    <dbReference type="NCBI Taxonomy" id="291331"/>
    <lineage>
        <taxon>Bacteria</taxon>
        <taxon>Pseudomonadati</taxon>
        <taxon>Pseudomonadota</taxon>
        <taxon>Gammaproteobacteria</taxon>
        <taxon>Lysobacterales</taxon>
        <taxon>Lysobacteraceae</taxon>
        <taxon>Xanthomonas</taxon>
    </lineage>
</organism>